<reference key="1">
    <citation type="book" date="2006" name="Gram positive pathogens, 2nd edition">
        <title>The Staphylococcus aureus NCTC 8325 genome.</title>
        <editorList>
            <person name="Fischetti V."/>
            <person name="Novick R."/>
            <person name="Ferretti J."/>
            <person name="Portnoy D."/>
            <person name="Rood J."/>
        </editorList>
        <authorList>
            <person name="Gillaspy A.F."/>
            <person name="Worrell V."/>
            <person name="Orvis J."/>
            <person name="Roe B.A."/>
            <person name="Dyer D.W."/>
            <person name="Iandolo J.J."/>
        </authorList>
    </citation>
    <scope>NUCLEOTIDE SEQUENCE [LARGE SCALE GENOMIC DNA]</scope>
    <source>
        <strain>NCTC 8325 / PS 47</strain>
    </source>
</reference>
<keyword id="KW-1185">Reference proteome</keyword>
<keyword id="KW-0677">Repeat</keyword>
<name>GLCT_STAA8</name>
<feature type="chain" id="PRO_0000352603" description="Protein GlcT">
    <location>
        <begin position="1"/>
        <end position="283"/>
    </location>
</feature>
<feature type="domain" description="PRD 1" evidence="1">
    <location>
        <begin position="69"/>
        <end position="173"/>
    </location>
</feature>
<feature type="domain" description="PRD 2" evidence="1">
    <location>
        <begin position="174"/>
        <end position="283"/>
    </location>
</feature>
<organism>
    <name type="scientific">Staphylococcus aureus (strain NCTC 8325 / PS 47)</name>
    <dbReference type="NCBI Taxonomy" id="93061"/>
    <lineage>
        <taxon>Bacteria</taxon>
        <taxon>Bacillati</taxon>
        <taxon>Bacillota</taxon>
        <taxon>Bacilli</taxon>
        <taxon>Bacillales</taxon>
        <taxon>Staphylococcaceae</taxon>
        <taxon>Staphylococcus</taxon>
    </lineage>
</organism>
<proteinExistence type="inferred from homology"/>
<dbReference type="EMBL" id="CP000253">
    <property type="protein sequence ID" value="ABD30451.1"/>
    <property type="molecule type" value="Genomic_DNA"/>
</dbReference>
<dbReference type="RefSeq" id="WP_000505015.1">
    <property type="nucleotide sequence ID" value="NZ_LS483365.1"/>
</dbReference>
<dbReference type="RefSeq" id="YP_499883.1">
    <property type="nucleotide sequence ID" value="NC_007795.1"/>
</dbReference>
<dbReference type="SMR" id="Q2G2N4"/>
<dbReference type="STRING" id="93061.SAOUHSC_01356"/>
<dbReference type="PaxDb" id="1280-SAXN108_1374"/>
<dbReference type="GeneID" id="3920061"/>
<dbReference type="KEGG" id="sao:SAOUHSC_01356"/>
<dbReference type="PATRIC" id="fig|93061.5.peg.1240"/>
<dbReference type="eggNOG" id="COG3711">
    <property type="taxonomic scope" value="Bacteria"/>
</dbReference>
<dbReference type="HOGENOM" id="CLU_078802_0_0_9"/>
<dbReference type="OrthoDB" id="9813552at2"/>
<dbReference type="PRO" id="PR:Q2G2N4"/>
<dbReference type="Proteomes" id="UP000008816">
    <property type="component" value="Chromosome"/>
</dbReference>
<dbReference type="GO" id="GO:0003723">
    <property type="term" value="F:RNA binding"/>
    <property type="evidence" value="ECO:0007669"/>
    <property type="project" value="InterPro"/>
</dbReference>
<dbReference type="GO" id="GO:0045893">
    <property type="term" value="P:positive regulation of DNA-templated transcription"/>
    <property type="evidence" value="ECO:0007669"/>
    <property type="project" value="InterPro"/>
</dbReference>
<dbReference type="Gene3D" id="1.20.58.1950">
    <property type="match status" value="1"/>
</dbReference>
<dbReference type="Gene3D" id="1.20.890.100">
    <property type="match status" value="1"/>
</dbReference>
<dbReference type="Gene3D" id="2.30.24.10">
    <property type="entry name" value="CAT RNA-binding domain"/>
    <property type="match status" value="1"/>
</dbReference>
<dbReference type="Gene3D" id="1.10.1790.10">
    <property type="entry name" value="PRD domain"/>
    <property type="match status" value="1"/>
</dbReference>
<dbReference type="InterPro" id="IPR050661">
    <property type="entry name" value="BglG_antiterminators"/>
</dbReference>
<dbReference type="InterPro" id="IPR004341">
    <property type="entry name" value="CAT_RNA-bd_dom"/>
</dbReference>
<dbReference type="InterPro" id="IPR036650">
    <property type="entry name" value="CAT_RNA-bd_dom_sf"/>
</dbReference>
<dbReference type="InterPro" id="IPR011608">
    <property type="entry name" value="PRD"/>
</dbReference>
<dbReference type="InterPro" id="IPR036634">
    <property type="entry name" value="PRD_sf"/>
</dbReference>
<dbReference type="InterPro" id="IPR001550">
    <property type="entry name" value="Transcrpt_antitermin_CS"/>
</dbReference>
<dbReference type="NCBIfam" id="NF047357">
    <property type="entry name" value="antiterm_GlcT"/>
    <property type="match status" value="1"/>
</dbReference>
<dbReference type="PANTHER" id="PTHR30185">
    <property type="entry name" value="CRYPTIC BETA-GLUCOSIDE BGL OPERON ANTITERMINATOR"/>
    <property type="match status" value="1"/>
</dbReference>
<dbReference type="PANTHER" id="PTHR30185:SF16">
    <property type="entry name" value="PROTEIN GLCT"/>
    <property type="match status" value="1"/>
</dbReference>
<dbReference type="Pfam" id="PF03123">
    <property type="entry name" value="CAT_RBD"/>
    <property type="match status" value="1"/>
</dbReference>
<dbReference type="Pfam" id="PF00874">
    <property type="entry name" value="PRD"/>
    <property type="match status" value="2"/>
</dbReference>
<dbReference type="SMART" id="SM01061">
    <property type="entry name" value="CAT_RBD"/>
    <property type="match status" value="1"/>
</dbReference>
<dbReference type="SUPFAM" id="SSF63520">
    <property type="entry name" value="PTS-regulatory domain, PRD"/>
    <property type="match status" value="2"/>
</dbReference>
<dbReference type="SUPFAM" id="SSF50151">
    <property type="entry name" value="SacY-like RNA-binding domain"/>
    <property type="match status" value="1"/>
</dbReference>
<dbReference type="PROSITE" id="PS00654">
    <property type="entry name" value="PRD_1"/>
    <property type="match status" value="1"/>
</dbReference>
<dbReference type="PROSITE" id="PS51372">
    <property type="entry name" value="PRD_2"/>
    <property type="match status" value="2"/>
</dbReference>
<accession>Q2G2N4</accession>
<gene>
    <name type="primary">glcT</name>
    <name type="ordered locus">SAOUHSC_01356</name>
</gene>
<evidence type="ECO:0000255" key="1">
    <source>
        <dbReference type="PROSITE-ProRule" id="PRU00704"/>
    </source>
</evidence>
<evidence type="ECO:0000305" key="2"/>
<protein>
    <recommendedName>
        <fullName>Protein GlcT</fullName>
    </recommendedName>
</protein>
<sequence length="283" mass="32823">MGEYIVTKTLNNNVVVCTNNDQEVILIGKGIGFNKKEGMALNDQTITIEKIYKLESEQQKAHYKSLVEIADDNVLQVIIDSLNFISNTAMNVDSKQLVVSLTDHIIFAYKRLKQNQVISNPFVMETMQLYSDAYHIAKQVIDQLNAALDVHFPEDEIGFIALHIASNTEDLSMHEMTLINNVIKKGIDIIESDLVTTVDKESLQYQRFIRHVQFLIRRLRRKEYIHAQDDFVSMIKNHYPICYNTAYKILTMIQKQFDVNISESEIIYLTLHIHHFEERINQS</sequence>
<comment type="similarity">
    <text evidence="2">Belongs to the transcriptional antiterminator BglG family. GlcT subfamily.</text>
</comment>